<organism>
    <name type="scientific">Human immunodeficiency virus type 1 group M subtype B (isolate SF33)</name>
    <name type="common">HIV-1</name>
    <dbReference type="NCBI Taxonomy" id="11690"/>
    <lineage>
        <taxon>Viruses</taxon>
        <taxon>Riboviria</taxon>
        <taxon>Pararnavirae</taxon>
        <taxon>Artverviricota</taxon>
        <taxon>Revtraviricetes</taxon>
        <taxon>Ortervirales</taxon>
        <taxon>Retroviridae</taxon>
        <taxon>Orthoretrovirinae</taxon>
        <taxon>Lentivirus</taxon>
        <taxon>Human immunodeficiency virus type 1</taxon>
    </lineage>
</organism>
<dbReference type="EMBL" id="AY352275">
    <property type="protein sequence ID" value="AAQ17031.1"/>
    <property type="molecule type" value="Genomic_DNA"/>
</dbReference>
<dbReference type="PDB" id="1MEQ">
    <property type="method" value="NMR"/>
    <property type="chains" value="A=484-506"/>
</dbReference>
<dbReference type="PDBsum" id="1MEQ"/>
<dbReference type="SMR" id="P19549"/>
<dbReference type="GlyCosmos" id="P19549">
    <property type="glycosylation" value="28 sites, No reported glycans"/>
</dbReference>
<dbReference type="Reactome" id="R-HSA-5621480">
    <property type="pathway name" value="Dectin-2 family"/>
</dbReference>
<dbReference type="EvolutionaryTrace" id="P19549"/>
<dbReference type="Proteomes" id="UP000118752">
    <property type="component" value="Genome"/>
</dbReference>
<dbReference type="GO" id="GO:0044175">
    <property type="term" value="C:host cell endosome membrane"/>
    <property type="evidence" value="ECO:0007669"/>
    <property type="project" value="UniProtKB-SubCell"/>
</dbReference>
<dbReference type="GO" id="GO:0020002">
    <property type="term" value="C:host cell plasma membrane"/>
    <property type="evidence" value="ECO:0007669"/>
    <property type="project" value="UniProtKB-SubCell"/>
</dbReference>
<dbReference type="GO" id="GO:0016020">
    <property type="term" value="C:membrane"/>
    <property type="evidence" value="ECO:0007669"/>
    <property type="project" value="UniProtKB-UniRule"/>
</dbReference>
<dbReference type="GO" id="GO:0019031">
    <property type="term" value="C:viral envelope"/>
    <property type="evidence" value="ECO:0007669"/>
    <property type="project" value="UniProtKB-KW"/>
</dbReference>
<dbReference type="GO" id="GO:0055036">
    <property type="term" value="C:virion membrane"/>
    <property type="evidence" value="ECO:0007669"/>
    <property type="project" value="UniProtKB-SubCell"/>
</dbReference>
<dbReference type="GO" id="GO:0005198">
    <property type="term" value="F:structural molecule activity"/>
    <property type="evidence" value="ECO:0007669"/>
    <property type="project" value="UniProtKB-UniRule"/>
</dbReference>
<dbReference type="GO" id="GO:0075512">
    <property type="term" value="P:clathrin-dependent endocytosis of virus by host cell"/>
    <property type="evidence" value="ECO:0007669"/>
    <property type="project" value="UniProtKB-UniRule"/>
</dbReference>
<dbReference type="GO" id="GO:0039654">
    <property type="term" value="P:fusion of virus membrane with host endosome membrane"/>
    <property type="evidence" value="ECO:0007669"/>
    <property type="project" value="UniProtKB-UniRule"/>
</dbReference>
<dbReference type="GO" id="GO:0019064">
    <property type="term" value="P:fusion of virus membrane with host plasma membrane"/>
    <property type="evidence" value="ECO:0007669"/>
    <property type="project" value="UniProtKB-UniRule"/>
</dbReference>
<dbReference type="GO" id="GO:1903908">
    <property type="term" value="P:positive regulation of plasma membrane raft polarization"/>
    <property type="evidence" value="ECO:0007669"/>
    <property type="project" value="UniProtKB-UniRule"/>
</dbReference>
<dbReference type="GO" id="GO:1903911">
    <property type="term" value="P:positive regulation of receptor clustering"/>
    <property type="evidence" value="ECO:0007669"/>
    <property type="project" value="UniProtKB-UniRule"/>
</dbReference>
<dbReference type="GO" id="GO:0019082">
    <property type="term" value="P:viral protein processing"/>
    <property type="evidence" value="ECO:0007669"/>
    <property type="project" value="UniProtKB-UniRule"/>
</dbReference>
<dbReference type="GO" id="GO:0019062">
    <property type="term" value="P:virion attachment to host cell"/>
    <property type="evidence" value="ECO:0007669"/>
    <property type="project" value="UniProtKB-UniRule"/>
</dbReference>
<dbReference type="CDD" id="cd09909">
    <property type="entry name" value="HIV-1-like_HR1-HR2"/>
    <property type="match status" value="1"/>
</dbReference>
<dbReference type="FunFam" id="1.10.287.210:FF:000001">
    <property type="entry name" value="Envelope glycoprotein gp160"/>
    <property type="match status" value="1"/>
</dbReference>
<dbReference type="FunFam" id="1.20.5.490:FF:000001">
    <property type="entry name" value="Envelope glycoprotein gp160"/>
    <property type="match status" value="1"/>
</dbReference>
<dbReference type="FunFam" id="2.170.40.20:FF:000001">
    <property type="entry name" value="Envelope glycoprotein gp160"/>
    <property type="match status" value="1"/>
</dbReference>
<dbReference type="FunFam" id="2.170.40.20:FF:000003">
    <property type="entry name" value="Envelope glycoprotein gp160"/>
    <property type="match status" value="1"/>
</dbReference>
<dbReference type="Gene3D" id="1.10.287.210">
    <property type="match status" value="1"/>
</dbReference>
<dbReference type="Gene3D" id="2.170.40.20">
    <property type="entry name" value="Human immunodeficiency virus 1, Gp160, envelope glycoprotein"/>
    <property type="match status" value="2"/>
</dbReference>
<dbReference type="Gene3D" id="1.20.5.490">
    <property type="entry name" value="Single helix bin"/>
    <property type="match status" value="1"/>
</dbReference>
<dbReference type="HAMAP" id="MF_04083">
    <property type="entry name" value="HIV_ENV"/>
    <property type="match status" value="1"/>
</dbReference>
<dbReference type="InterPro" id="IPR036377">
    <property type="entry name" value="Gp120_core_sf"/>
</dbReference>
<dbReference type="InterPro" id="IPR037527">
    <property type="entry name" value="Gp160"/>
</dbReference>
<dbReference type="InterPro" id="IPR000328">
    <property type="entry name" value="GP41-like"/>
</dbReference>
<dbReference type="InterPro" id="IPR000777">
    <property type="entry name" value="HIV1_Gp120"/>
</dbReference>
<dbReference type="Pfam" id="PF00516">
    <property type="entry name" value="GP120"/>
    <property type="match status" value="1"/>
</dbReference>
<dbReference type="Pfam" id="PF00517">
    <property type="entry name" value="GP41"/>
    <property type="match status" value="1"/>
</dbReference>
<dbReference type="SUPFAM" id="SSF56502">
    <property type="entry name" value="gp120 core"/>
    <property type="match status" value="2"/>
</dbReference>
<dbReference type="SUPFAM" id="SSF58069">
    <property type="entry name" value="Virus ectodomain"/>
    <property type="match status" value="1"/>
</dbReference>
<organismHost>
    <name type="scientific">Homo sapiens</name>
    <name type="common">Human</name>
    <dbReference type="NCBI Taxonomy" id="9606"/>
</organismHost>
<protein>
    <recommendedName>
        <fullName evidence="1">Envelope glycoprotein gp160</fullName>
    </recommendedName>
    <alternativeName>
        <fullName evidence="1">Env polyprotein</fullName>
    </alternativeName>
    <component>
        <recommendedName>
            <fullName evidence="1">Surface protein gp120</fullName>
            <shortName evidence="1">SU</shortName>
        </recommendedName>
        <alternativeName>
            <fullName evidence="1">Glycoprotein 120</fullName>
            <shortName evidence="1">gp120</shortName>
        </alternativeName>
    </component>
    <component>
        <recommendedName>
            <fullName evidence="1">Transmembrane protein gp41</fullName>
            <shortName evidence="1">TM</shortName>
        </recommendedName>
        <alternativeName>
            <fullName evidence="1">Glycoprotein 41</fullName>
            <shortName evidence="1">gp41</shortName>
        </alternativeName>
    </component>
</protein>
<comment type="function">
    <molecule>Envelope glycoprotein gp160</molecule>
    <text evidence="1">Oligomerizes in the host endoplasmic reticulum into predominantly trimers. In a second time, gp160 transits in the host Golgi, where glycosylation is completed. The precursor is then proteolytically cleaved in the trans-Golgi and thereby activated by cellular furin or furin-like proteases to produce gp120 and gp41.</text>
</comment>
<comment type="function">
    <molecule>Surface protein gp120</molecule>
    <text evidence="1">Attaches the virus to the host lymphoid cell by binding to the primary receptor CD4. This interaction induces a structural rearrangement creating a high affinity binding site for a chemokine coreceptor like CXCR4 and/or CCR5. Acts as a ligand for CD209/DC-SIGN and CLEC4M/DC-SIGNR, which are respectively found on dendritic cells (DCs), and on endothelial cells of liver sinusoids and lymph node sinuses. These interactions allow capture of viral particles at mucosal surfaces by these cells and subsequent transmission to permissive cells. HIV subverts the migration properties of dendritic cells to gain access to CD4+ T-cells in lymph nodes. Virus transmission to permissive T-cells occurs either in trans (without DCs infection, through viral capture and transmission), or in cis (following DCs productive infection, through the usual CD4-gp120 interaction), thereby inducing a robust infection. In trans infection, bound virions remain infectious over days and it is proposed that they are not degraded, but protected in non-lysosomal acidic organelles within the DCs close to the cell membrane thus contributing to the viral infectious potential during DCs' migration from the periphery to the lymphoid tissues. On arrival at lymphoid tissues, intact virions recycle back to DCs' cell surface allowing virus transmission to CD4+ T-cells.</text>
</comment>
<comment type="function">
    <molecule>Transmembrane protein gp41</molecule>
    <text evidence="1">Acts as a class I viral fusion protein. Under the current model, the protein has at least 3 conformational states: pre-fusion native state, pre-hairpin intermediate state, and post-fusion hairpin state. During fusion of viral and target intracellular membranes, the coiled coil regions (heptad repeats) assume a trimer-of-hairpins structure, positioning the fusion peptide in close proximity to the C-terminal region of the ectodomain. The formation of this structure appears to drive apposition and subsequent fusion of viral and target cell membranes. Complete fusion occurs in host cell endosomes and is dynamin-dependent, however some lipid transfer might occur at the plasma membrane. The virus undergoes clathrin-dependent internalization long before endosomal fusion, thus minimizing the surface exposure of conserved viral epitopes during fusion and reducing the efficacy of inhibitors targeting these epitopes. Membranes fusion leads to delivery of the nucleocapsid into the cytoplasm.</text>
</comment>
<comment type="subunit">
    <molecule>Surface protein gp120</molecule>
    <text evidence="1">The mature envelope protein (Env) consists of a homotrimer of non-covalently associated gp120-gp41 heterodimers. The resulting complex protrudes from the virus surface as a spike. There seems to be as few as 10 spikes on the average virion. Interacts with host CD4, CCR5 and CXCR4. Gp120 also interacts with the C-type lectins CD209/DC-SIGN and CLEC4M/DC-SIGNR (collectively referred to as DC-SIGN(R)). Gp120 and gp41 interact with GalCer. Gp120 interacts with host ITGA4/ITGB7 complex; on CD4+ T-cells, this interaction results in rapid activation of integrin ITGAL/LFA-1, which facilitates efficient cell-to-cell spreading of HIV-1. Gp120 interacts with cell-associated heparan sulfate; this interaction increases virus infectivity on permissive cells and may be involved in infection of CD4- cells.</text>
</comment>
<comment type="subunit">
    <molecule>Transmembrane protein gp41</molecule>
    <text evidence="1">The mature envelope protein (Env) consists of a homotrimer of non-covalently associated gp120-gp41 heterodimers. The resulting complex protrudes from the virus surface as a spike. There seems to be as few as 10 spikes on the average virion.</text>
</comment>
<comment type="subcellular location">
    <molecule>Surface protein gp120</molecule>
    <subcellularLocation>
        <location evidence="1">Virion membrane</location>
        <topology evidence="1">Peripheral membrane protein</topology>
    </subcellularLocation>
    <subcellularLocation>
        <location evidence="1">Host cell membrane</location>
        <topology evidence="1">Peripheral membrane protein</topology>
    </subcellularLocation>
    <subcellularLocation>
        <location evidence="1">Host endosome membrane</location>
        <topology evidence="1">Single-pass type I membrane protein</topology>
    </subcellularLocation>
    <text evidence="1">The surface protein is not anchored to the viral envelope, but associates with the extravirion surface through its binding to TM. It is probably concentrated at the site of budding and incorporated into the virions possibly by contacts between the cytoplasmic tail of Env and the N-terminus of Gag.</text>
</comment>
<comment type="subcellular location">
    <molecule>Transmembrane protein gp41</molecule>
    <subcellularLocation>
        <location evidence="1">Virion membrane</location>
        <topology evidence="1">Single-pass type I membrane protein</topology>
    </subcellularLocation>
    <subcellularLocation>
        <location evidence="1">Host cell membrane</location>
        <topology evidence="1">Single-pass type I membrane protein</topology>
    </subcellularLocation>
    <subcellularLocation>
        <location evidence="1">Host endosome membrane</location>
        <topology evidence="1">Single-pass type I membrane protein</topology>
    </subcellularLocation>
    <text evidence="1">It is probably concentrated at the site of budding and incorporated into the virions possibly by contacts between the cytoplasmic tail of Env and the N-terminus of Gag.</text>
</comment>
<comment type="domain">
    <text evidence="1">Some of the most genetically diverse regions of the viral genome are present in Env. They are called variable regions 1 through 5 (V1 through V5). Coreceptor usage of gp120 is determined mainly by the primary structure of the third variable region (V3) in the outer domain of gp120. The sequence of V3 determines which coreceptor, CCR5 and/or CXCR4 (corresponding to R5/macrophage, X4/T cell and R5X4/T cell and macrophage tropism), is used to trigger the fusion potential of the Env complex, and hence which cells the virus can infect. Binding to CCR5 involves a region adjacent in addition to V3.</text>
</comment>
<comment type="domain">
    <text evidence="1">The membrane proximal external region (MPER) present in gp41 is a tryptophan-rich region recognized by the antibodies 2F5, Z13, and 4E10. MPER seems to play a role in fusion.</text>
</comment>
<comment type="domain">
    <text evidence="1">The 17 amino acids long immunosuppressive region is present in many retroviral envelope proteins. Synthetic peptides derived from this relatively conserved sequence inhibit immune function in vitro and in vivo.</text>
</comment>
<comment type="domain">
    <text evidence="1">The YXXL motif is involved in determining the exact site of viral release at the surface of infected mononuclear cells and promotes endocytosis. YXXL and di-leucine endocytosis motifs interact directly or indirectly with the clathrin adapter complexes, opperate independently, and their activities are not additive.</text>
</comment>
<comment type="domain">
    <text evidence="1">The CD4-binding region is targeted by the antibody b12.</text>
</comment>
<comment type="PTM">
    <text evidence="1">Highly glycosylated by host. The high number of glycan on the protein is reffered to as 'glycan shield' because it contributes to hide protein sequence from adaptive immune system.</text>
</comment>
<comment type="PTM">
    <text evidence="1">Palmitoylation of the transmembrane protein and of Env polyprotein (prior to its proteolytic cleavage) is essential for their association with host cell membrane lipid rafts. Palmitoylation is therefore required for envelope trafficking to classical lipid rafts, but not for viral replication.</text>
</comment>
<comment type="PTM">
    <text evidence="1">Specific enzymatic cleavages in vivo yield mature proteins. Envelope glycoproteins are synthesized as an inactive precursor that is heavily N-glycosylated and processed likely by host cell furin in the Golgi to yield the mature SU and TM proteins. The cleavage site between SU and TM requires the minimal sequence [KR]-X-[KR]-R. About 2 of the 9 disulfide bonds of gp41 are reduced by P4HB/PDI, following binding to CD4 receptor.</text>
</comment>
<comment type="miscellaneous">
    <text evidence="1">Inhibitors targeting HIV-1 viral envelope proteins are used as antiretroviral drugs. Attachment of virions to the cell surface via non-specific interactions and CD4 binding can be blocked by inhibitors that include cyanovirin-N, cyclotriazadisulfonamide analogs, PRO 2000, TNX 355 and PRO 542. In addition, BMS 806 can block CD4-induced conformational changes. Env interactions with the coreceptor molecules can be targeted by CCR5 antagonists including SCH-D, maraviroc (UK 427857) and aplaviroc (GW 873140), and the CXCR4 antagonist AMD 070. Fusion of viral and cellular membranes can be inhibited by peptides such as enfuvirtide and tifuvirtide (T 1249). Resistance to inhibitors associated with mutations in Env are observed. Most of the time, single mutations confer only a modest reduction in drug susceptibility. Combination of several mutations is usually required to develop a high-level drug resistance.</text>
</comment>
<comment type="miscellaneous">
    <text evidence="1">HIV-1 lineages are divided in three main groups, M (for Major), O (for Outlier), and N (for New, or Non-M, Non-O). The vast majority of strains found worldwide belong to the group M. Group O seems to be endemic to and largely confined to Cameroon and neighboring countries in West Central Africa, where these viruses represent a small minority of HIV-1 strains. The group N is represented by a limited number of isolates from Cameroonian persons. The group M is further subdivided in 9 clades or subtypes (A to D, F to H, J and K).</text>
</comment>
<comment type="similarity">
    <text evidence="1">Belongs to the HIV-1 env protein family.</text>
</comment>
<comment type="online information" name="hivdb">
    <link uri="https://hivdb.stanford.edu"/>
    <text>HIV drug resistance database</text>
</comment>
<comment type="online information" name="HIV drug resistance mutations">
    <link uri="https://www.iasusa.org/hiv-drug-resistance/hiv-drug-resistance-mutations/"/>
</comment>
<gene>
    <name evidence="1" type="primary">env</name>
</gene>
<proteinExistence type="evidence at protein level"/>
<keyword id="KW-0002">3D-structure</keyword>
<keyword id="KW-0014">AIDS</keyword>
<keyword id="KW-0053">Apoptosis</keyword>
<keyword id="KW-1165">Clathrin-mediated endocytosis of virus by host</keyword>
<keyword id="KW-0165">Cleavage on pair of basic residues</keyword>
<keyword id="KW-0175">Coiled coil</keyword>
<keyword id="KW-1015">Disulfide bond</keyword>
<keyword id="KW-1170">Fusion of virus membrane with host endosomal membrane</keyword>
<keyword id="KW-1168">Fusion of virus membrane with host membrane</keyword>
<keyword id="KW-0325">Glycoprotein</keyword>
<keyword id="KW-1032">Host cell membrane</keyword>
<keyword id="KW-1039">Host endosome</keyword>
<keyword id="KW-1043">Host membrane</keyword>
<keyword id="KW-0945">Host-virus interaction</keyword>
<keyword id="KW-0449">Lipoprotein</keyword>
<keyword id="KW-0472">Membrane</keyword>
<keyword id="KW-0564">Palmitate</keyword>
<keyword id="KW-0732">Signal</keyword>
<keyword id="KW-0812">Transmembrane</keyword>
<keyword id="KW-1133">Transmembrane helix</keyword>
<keyword id="KW-1161">Viral attachment to host cell</keyword>
<keyword id="KW-0261">Viral envelope protein</keyword>
<keyword id="KW-0899">Viral immunoevasion</keyword>
<keyword id="KW-1162">Viral penetration into host cytoplasm</keyword>
<keyword id="KW-0946">Virion</keyword>
<keyword id="KW-1164">Virus endocytosis by host</keyword>
<keyword id="KW-1160">Virus entry into host cell</keyword>
<sequence>MRARETRKNYQCLWRWGTMLLGMLMICSAAENLWVTVYYGVPVWKDATTTLFCASDAKAYDTEVHNVWATHACVPTDPNPQEVVLGNVTENFNMWKNNMVDQMHEDIVSLWDQSLKPCVKLTPLCVTLNCTDYLGNATNTNNSSGGTVEKEEIKNCSFNITTGIRDKVQKAYAYFYKLDVVPIDDDNTNTSYRLIHCNSSVITQTCPKVSFEPIPIHYCAPAGFAILKCNNKKFSGKGQCTNVSTVQCTHGIKPVVSTQLLLNGSLAEEEVVIRSDNFTNNAKTILVQLNVSVEINCTRPNNNRRRRITSGPGKVLYTTGEIIGDIRKAYCNISRAKWNKTLEQVATKLREQFGNKTIVFKQSSGGDPEIVMHSFNCRGEFFYCNTTKLFNSTWNENSTWNATGNDTITLPCRIKQIINMWQEVGKAMYAPPIEGQIRCSSNITGLLLTRDGGGDKNSTTEIFRPAGGNMKDNWRSELYKYKVVKIEPLGVAPTKAKRRVVQREKRAVGVIGAMFLGFLGAAGSTMGAASITLTVQARKLLSGIVQQQNNLLRAIEAQQHLLQLTVWGIKQLQARVLAVERYLRDQQLLGIWGCSGKLICTTTVPWNTSWSNKSLDKIWNNMTWMEWEREIDNYTSLIYTLLEESQNQQEKNEQELLELDKWASLWNWFSITNWLWYIRIFIMIVGGLIGLRIIFAVLSIVNRVRQGYSPLSFQTLIPAQRGPDRPEGIEEGGGERDRDRSTRLVNGFLALFWDDLRSLCLFSYHRLTDLLLIVARIVELLGRRGWEVLKYWWNLLLYWSQELKNSAVSLLNATAIAVAEGTDRVIEVVQRVGRAILHIPTRIRQGFERALL</sequence>
<reference key="1">
    <citation type="journal article" date="1990" name="J. Virol.">
        <title>Human immunodeficiency virus type 1 cellular host range, replication, and cytopathicity are linked to the envelope region of the viral genome.</title>
        <authorList>
            <person name="York-Higgins D."/>
            <person name="Cheng-Mayer C."/>
            <person name="Bauer D."/>
            <person name="Levy J.A."/>
            <person name="Dina D."/>
        </authorList>
    </citation>
    <scope>NUCLEOTIDE SEQUENCE [GENOMIC DNA]</scope>
</reference>
<reference key="2">
    <citation type="journal article" date="2003" name="APMIS">
        <title>Pathogens target DC-SIGN to influence their fate DC-SIGN functions as a pathogen receptor with broad specificity.</title>
        <authorList>
            <person name="Geijtenbeek T.B."/>
            <person name="van Kooyk Y."/>
        </authorList>
    </citation>
    <scope>REVIEW</scope>
</reference>
<reference key="3">
    <citation type="journal article" date="2003" name="Biochim. Biophys. Acta">
        <title>The HIV Env-mediated fusion reaction.</title>
        <authorList>
            <person name="Gallo S.A."/>
            <person name="Finnegan C.M."/>
            <person name="Viard M."/>
            <person name="Raviv Y."/>
            <person name="Dimitrov A."/>
            <person name="Rawat S.S."/>
            <person name="Puri A."/>
            <person name="Durell S."/>
            <person name="Blumenthal R."/>
        </authorList>
    </citation>
    <scope>REVIEW</scope>
</reference>
<reference key="4">
    <citation type="journal article" date="2005" name="Cell Death Differ.">
        <title>Mechanisms of apoptosis induction by the HIV-1 envelope.</title>
        <authorList>
            <person name="Perfettini J.-L."/>
            <person name="Castedo M."/>
            <person name="Roumier T."/>
            <person name="Andreau K."/>
            <person name="Nardacci R."/>
            <person name="Piacentini M."/>
            <person name="Kroemer G."/>
        </authorList>
    </citation>
    <scope>REVIEW</scope>
</reference>
<reference key="5">
    <citation type="journal article" date="2005" name="AIDS Res. Hum. Retroviruses">
        <title>V3: HIV's switch-hitter.</title>
        <authorList>
            <person name="Hartley O."/>
            <person name="Klasse P.J."/>
            <person name="Sattentau Q.J."/>
            <person name="Moore J.P."/>
        </authorList>
    </citation>
    <scope>REVIEW</scope>
</reference>
<reference key="6">
    <citation type="journal article" date="2005" name="Drugs">
        <title>Emerging drug targets for antiretroviral therapy.</title>
        <authorList>
            <person name="Reeves J.D."/>
            <person name="Piefer A.J."/>
        </authorList>
    </citation>
    <scope>REVIEW</scope>
</reference>
<reference key="7">
    <citation type="journal article" date="2006" name="EMBO J.">
        <title>HIV and the chemokine system: 10 years later.</title>
        <authorList>
            <person name="Lusso P."/>
        </authorList>
    </citation>
    <scope>REVIEW</scope>
</reference>
<feature type="signal peptide" evidence="1">
    <location>
        <begin position="1"/>
        <end position="31"/>
    </location>
</feature>
<feature type="chain" id="PRO_0000239478" description="Envelope glycoprotein gp160" evidence="1">
    <location>
        <begin position="32"/>
        <end position="852"/>
    </location>
</feature>
<feature type="chain" id="PRO_0000038396" description="Surface protein gp120" evidence="1">
    <location>
        <begin position="32"/>
        <end position="506"/>
    </location>
</feature>
<feature type="chain" id="PRO_0000038397" description="Transmembrane protein gp41" evidence="1">
    <location>
        <begin position="507"/>
        <end position="852"/>
    </location>
</feature>
<feature type="topological domain" description="Extracellular" evidence="1">
    <location>
        <begin position="32"/>
        <end position="680"/>
    </location>
</feature>
<feature type="transmembrane region" description="Helical" evidence="1">
    <location>
        <begin position="681"/>
        <end position="701"/>
    </location>
</feature>
<feature type="topological domain" description="Cytoplasmic" evidence="1">
    <location>
        <begin position="702"/>
        <end position="852"/>
    </location>
</feature>
<feature type="region of interest" description="V1" evidence="1">
    <location>
        <begin position="130"/>
        <end position="155"/>
    </location>
</feature>
<feature type="region of interest" description="V2" evidence="1">
    <location>
        <begin position="156"/>
        <end position="197"/>
    </location>
</feature>
<feature type="region of interest" description="V3" evidence="1">
    <location>
        <begin position="297"/>
        <end position="330"/>
    </location>
</feature>
<feature type="region of interest" description="CD4-binding loop" evidence="1">
    <location>
        <begin position="363"/>
        <end position="373"/>
    </location>
</feature>
<feature type="region of interest" description="V4" evidence="1">
    <location>
        <begin position="384"/>
        <end position="412"/>
    </location>
</feature>
<feature type="region of interest" description="V5">
    <location>
        <begin position="455"/>
        <end position="466"/>
    </location>
</feature>
<feature type="region of interest" description="V5" evidence="1">
    <location>
        <begin position="457"/>
        <end position="466"/>
    </location>
</feature>
<feature type="region of interest" description="Fusion peptide" evidence="1">
    <location>
        <begin position="507"/>
        <end position="528"/>
    </location>
</feature>
<feature type="region of interest" description="Immunosuppression" evidence="1">
    <location>
        <begin position="570"/>
        <end position="588"/>
    </location>
</feature>
<feature type="region of interest" description="MPER; binding to GalCer" evidence="1">
    <location>
        <begin position="658"/>
        <end position="679"/>
    </location>
</feature>
<feature type="region of interest" description="Disordered" evidence="2">
    <location>
        <begin position="717"/>
        <end position="739"/>
    </location>
</feature>
<feature type="coiled-coil region" evidence="1">
    <location>
        <begin position="629"/>
        <end position="663"/>
    </location>
</feature>
<feature type="short sequence motif" description="YXXL motif; contains endocytosis signal" evidence="1">
    <location>
        <begin position="708"/>
        <end position="711"/>
    </location>
</feature>
<feature type="short sequence motif" description="Di-leucine internalization motif" evidence="1">
    <location>
        <begin position="851"/>
        <end position="852"/>
    </location>
</feature>
<feature type="compositionally biased region" description="Basic and acidic residues" evidence="2">
    <location>
        <begin position="722"/>
        <end position="739"/>
    </location>
</feature>
<feature type="site" description="Cleavage; by host furin" evidence="1">
    <location>
        <begin position="506"/>
        <end position="507"/>
    </location>
</feature>
<feature type="lipid moiety-binding region" description="S-palmitoyl cysteine; by host" evidence="1">
    <location>
        <position position="760"/>
    </location>
</feature>
<feature type="glycosylation site" description="N-linked (GlcNAc...) asparagine; by host" evidence="1">
    <location>
        <position position="87"/>
    </location>
</feature>
<feature type="glycosylation site" description="N-linked (GlcNAc...) asparagine; by host" evidence="1">
    <location>
        <position position="129"/>
    </location>
</feature>
<feature type="glycosylation site" description="N-linked (GlcNAc...) asparagine; by host" evidence="1">
    <location>
        <position position="136"/>
    </location>
</feature>
<feature type="glycosylation site" description="N-linked (GlcNAc...) asparagine; by host" evidence="1">
    <location>
        <position position="141"/>
    </location>
</feature>
<feature type="glycosylation site" description="N-linked (GlcNAc...) asparagine; by host" evidence="1">
    <location>
        <position position="142"/>
    </location>
</feature>
<feature type="glycosylation site" description="N-linked (GlcNAc...) asparagine; by host" evidence="1">
    <location>
        <position position="155"/>
    </location>
</feature>
<feature type="glycosylation site" description="N-linked (GlcNAc...) asparagine; by host" evidence="1">
    <location>
        <position position="159"/>
    </location>
</feature>
<feature type="glycosylation site" description="N-linked (GlcNAc...) asparagine; by host" evidence="1">
    <location>
        <position position="189"/>
    </location>
</feature>
<feature type="glycosylation site" description="N-linked (GlcNAc...) asparagine; by host" evidence="1">
    <location>
        <position position="198"/>
    </location>
</feature>
<feature type="glycosylation site" description="N-linked (GlcNAc...) asparagine; by host" evidence="1">
    <location>
        <position position="242"/>
    </location>
</feature>
<feature type="glycosylation site" description="N-linked (GlcNAc...) asparagine; by host" evidence="1">
    <location>
        <position position="263"/>
    </location>
</feature>
<feature type="glycosylation site" description="N-linked (GlcNAc...) asparagine; by host" evidence="1">
    <location>
        <position position="277"/>
    </location>
</feature>
<feature type="glycosylation site" description="N-linked (GlcNAc...) asparagine; by host" evidence="1">
    <location>
        <position position="290"/>
    </location>
</feature>
<feature type="glycosylation site" description="N-linked (GlcNAc...) asparagine; by host" evidence="1">
    <location>
        <position position="296"/>
    </location>
</feature>
<feature type="glycosylation site" description="N-linked (GlcNAc...) asparagine; by host" evidence="1">
    <location>
        <position position="332"/>
    </location>
</feature>
<feature type="glycosylation site" description="N-linked (GlcNAc...) asparagine; by host" evidence="1">
    <location>
        <position position="339"/>
    </location>
</feature>
<feature type="glycosylation site" description="N-linked (GlcNAc...) asparagine; by host" evidence="1">
    <location>
        <position position="355"/>
    </location>
</feature>
<feature type="glycosylation site" description="N-linked (GlcNAc...) asparagine; by host" evidence="1">
    <location>
        <position position="385"/>
    </location>
</feature>
<feature type="glycosylation site" description="N-linked (GlcNAc...) asparagine; by host" evidence="1">
    <location>
        <position position="391"/>
    </location>
</feature>
<feature type="glycosylation site" description="N-linked (GlcNAc...) asparagine; by host" evidence="1">
    <location>
        <position position="397"/>
    </location>
</feature>
<feature type="glycosylation site" description="N-linked (GlcNAc...) asparagine; by host" evidence="1">
    <location>
        <position position="401"/>
    </location>
</feature>
<feature type="glycosylation site" description="N-linked (GlcNAc...) asparagine; by host" evidence="1">
    <location>
        <position position="405"/>
    </location>
</feature>
<feature type="glycosylation site" description="N-linked (GlcNAc...) asparagine; by host" evidence="1">
    <location>
        <position position="442"/>
    </location>
</feature>
<feature type="glycosylation site" description="N-linked (GlcNAc...) asparagine; by host" evidence="1">
    <location>
        <position position="457"/>
    </location>
</feature>
<feature type="glycosylation site" description="N-linked (GlcNAc...) asparagine; by host" evidence="1">
    <location>
        <position position="607"/>
    </location>
</feature>
<feature type="glycosylation site" description="N-linked (GlcNAc...) asparagine; by host" evidence="1">
    <location>
        <position position="612"/>
    </location>
</feature>
<feature type="glycosylation site" description="N-linked (GlcNAc...) asparagine; by host" evidence="1">
    <location>
        <position position="621"/>
    </location>
</feature>
<feature type="glycosylation site" description="N-linked (GlcNAc...) asparagine; by host" evidence="1">
    <location>
        <position position="633"/>
    </location>
</feature>
<feature type="disulfide bond" evidence="1">
    <location>
        <begin position="53"/>
        <end position="73"/>
    </location>
</feature>
<feature type="disulfide bond" evidence="1">
    <location>
        <begin position="118"/>
        <end position="206"/>
    </location>
</feature>
<feature type="disulfide bond" evidence="1">
    <location>
        <begin position="125"/>
        <end position="197"/>
    </location>
</feature>
<feature type="disulfide bond" evidence="1">
    <location>
        <begin position="130"/>
        <end position="156"/>
    </location>
</feature>
<feature type="disulfide bond" evidence="1">
    <location>
        <begin position="219"/>
        <end position="248"/>
    </location>
</feature>
<feature type="disulfide bond" evidence="1">
    <location>
        <begin position="229"/>
        <end position="240"/>
    </location>
</feature>
<feature type="disulfide bond" evidence="1">
    <location>
        <begin position="297"/>
        <end position="331"/>
    </location>
</feature>
<feature type="disulfide bond" evidence="1">
    <location>
        <begin position="377"/>
        <end position="439"/>
    </location>
</feature>
<feature type="disulfide bond" evidence="1">
    <location>
        <begin position="384"/>
        <end position="412"/>
    </location>
</feature>
<feature type="disulfide bond" evidence="1">
    <location>
        <begin position="594"/>
        <end position="600"/>
    </location>
</feature>
<feature type="turn" evidence="3">
    <location>
        <begin position="488"/>
        <end position="490"/>
    </location>
</feature>
<feature type="helix" evidence="3">
    <location>
        <begin position="494"/>
        <end position="504"/>
    </location>
</feature>
<accession>P19549</accession>
<evidence type="ECO:0000255" key="1">
    <source>
        <dbReference type="HAMAP-Rule" id="MF_04083"/>
    </source>
</evidence>
<evidence type="ECO:0000256" key="2">
    <source>
        <dbReference type="SAM" id="MobiDB-lite"/>
    </source>
</evidence>
<evidence type="ECO:0007829" key="3">
    <source>
        <dbReference type="PDB" id="1MEQ"/>
    </source>
</evidence>
<name>ENV_HV1S3</name>